<organism>
    <name type="scientific">Salmonella dublin (strain CT_02021853)</name>
    <dbReference type="NCBI Taxonomy" id="439851"/>
    <lineage>
        <taxon>Bacteria</taxon>
        <taxon>Pseudomonadati</taxon>
        <taxon>Pseudomonadota</taxon>
        <taxon>Gammaproteobacteria</taxon>
        <taxon>Enterobacterales</taxon>
        <taxon>Enterobacteriaceae</taxon>
        <taxon>Salmonella</taxon>
    </lineage>
</organism>
<evidence type="ECO:0000255" key="1">
    <source>
        <dbReference type="HAMAP-Rule" id="MF_00827"/>
    </source>
</evidence>
<comment type="similarity">
    <text evidence="1">Belongs to the UPF0386 family.</text>
</comment>
<proteinExistence type="inferred from homology"/>
<accession>B5FT52</accession>
<reference key="1">
    <citation type="journal article" date="2011" name="J. Bacteriol.">
        <title>Comparative genomics of 28 Salmonella enterica isolates: evidence for CRISPR-mediated adaptive sublineage evolution.</title>
        <authorList>
            <person name="Fricke W.F."/>
            <person name="Mammel M.K."/>
            <person name="McDermott P.F."/>
            <person name="Tartera C."/>
            <person name="White D.G."/>
            <person name="Leclerc J.E."/>
            <person name="Ravel J."/>
            <person name="Cebula T.A."/>
        </authorList>
    </citation>
    <scope>NUCLEOTIDE SEQUENCE [LARGE SCALE GENOMIC DNA]</scope>
    <source>
        <strain>CT_02021853</strain>
    </source>
</reference>
<gene>
    <name evidence="1" type="primary">yjhX</name>
    <name type="ordered locus">SeD_A4900</name>
</gene>
<name>YJHX_SALDC</name>
<protein>
    <recommendedName>
        <fullName evidence="1">UPF0386 protein YjhX</fullName>
    </recommendedName>
</protein>
<dbReference type="EMBL" id="CP001144">
    <property type="protein sequence ID" value="ACH75010.1"/>
    <property type="molecule type" value="Genomic_DNA"/>
</dbReference>
<dbReference type="RefSeq" id="WP_001054381.1">
    <property type="nucleotide sequence ID" value="NC_011205.1"/>
</dbReference>
<dbReference type="KEGG" id="sed:SeD_A4900"/>
<dbReference type="HOGENOM" id="CLU_164736_0_0_6"/>
<dbReference type="Proteomes" id="UP000008322">
    <property type="component" value="Chromosome"/>
</dbReference>
<dbReference type="HAMAP" id="MF_00827">
    <property type="entry name" value="UPF0386"/>
    <property type="match status" value="1"/>
</dbReference>
<dbReference type="InterPro" id="IPR018654">
    <property type="entry name" value="YjhX_toxin"/>
</dbReference>
<dbReference type="NCBIfam" id="NF010240">
    <property type="entry name" value="PRK13687.1"/>
    <property type="match status" value="1"/>
</dbReference>
<dbReference type="Pfam" id="PF09857">
    <property type="entry name" value="YjhX_toxin"/>
    <property type="match status" value="1"/>
</dbReference>
<feature type="chain" id="PRO_1000200707" description="UPF0386 protein YjhX">
    <location>
        <begin position="1"/>
        <end position="85"/>
    </location>
</feature>
<sequence length="85" mass="9507">MNLSRQEQRTLHVLAKGGRITHIRDASGRVTAVECYSREGLLLADCTLAVFKKLKTKKLIKSVNGQPYRINTTGLNSVRAQPDNR</sequence>